<protein>
    <recommendedName>
        <fullName evidence="1">tRNA-2-methylthio-N(6)-dimethylallyladenosine synthase</fullName>
        <ecNumber evidence="1">2.8.4.3</ecNumber>
    </recommendedName>
    <alternativeName>
        <fullName evidence="1">(Dimethylallyl)adenosine tRNA methylthiotransferase MiaB</fullName>
    </alternativeName>
    <alternativeName>
        <fullName evidence="1">tRNA-i(6)A37 methylthiotransferase</fullName>
    </alternativeName>
</protein>
<organism>
    <name type="scientific">Clostridium botulinum (strain Alaska E43 / Type E3)</name>
    <dbReference type="NCBI Taxonomy" id="508767"/>
    <lineage>
        <taxon>Bacteria</taxon>
        <taxon>Bacillati</taxon>
        <taxon>Bacillota</taxon>
        <taxon>Clostridia</taxon>
        <taxon>Eubacteriales</taxon>
        <taxon>Clostridiaceae</taxon>
        <taxon>Clostridium</taxon>
    </lineage>
</organism>
<sequence length="456" mass="52464">MNFDIEKLEKIKVRDGQEFFFIQTFGCQMNEEDSEKLSGMLKSQGYEETENRDEASIVIFNTCCVRENAENKVFGNLGRLKNQKEKNPNLIIALCGCMMQQKGMADEILSRFPYVDIIFGTHNAYKFPEYLHRVQVEGVQVKEIFDKETEIVEGVPIDRKSNVKAFVTIMYGCNNFCTYCVVPYVRGRERSRRPEDIENEIKELVSNGYKEITLLGQNVNSYGKGLEEEITFAQLLRRINEIDGLERLRFMTSHPKDLTLDVVYAIRDCDKLCEQIHLPVQSGSNEILQKMNRHYNKEQYLELAKKIREEIPDVTFSTDIIVGFPGETEEDFEETINLVKEVRYDAAFTFIYSRRNHTPADKMEDQIPDDVKHDRFNRLVAAVNEGIVVGNKAAEGKIYEVLVEGTSKNNENKLTGRTRNAKLVNFDGCKEMIGKLVKVKIIEAKSFSLVGEVVEQ</sequence>
<name>MIAB_CLOBA</name>
<reference key="1">
    <citation type="submission" date="2008-05" db="EMBL/GenBank/DDBJ databases">
        <title>Complete genome sequence of Clostridium botulinum E3 str. Alaska E43.</title>
        <authorList>
            <person name="Brinkac L.M."/>
            <person name="Brown J.L."/>
            <person name="Bruce D."/>
            <person name="Detter C."/>
            <person name="Munk C."/>
            <person name="Smith L.A."/>
            <person name="Smith T.J."/>
            <person name="Sutton G."/>
            <person name="Brettin T.S."/>
        </authorList>
    </citation>
    <scope>NUCLEOTIDE SEQUENCE [LARGE SCALE GENOMIC DNA]</scope>
    <source>
        <strain>Alaska E43 / Type E3</strain>
    </source>
</reference>
<dbReference type="EC" id="2.8.4.3" evidence="1"/>
<dbReference type="EMBL" id="CP001078">
    <property type="protein sequence ID" value="ACD53381.1"/>
    <property type="molecule type" value="Genomic_DNA"/>
</dbReference>
<dbReference type="RefSeq" id="WP_012451298.1">
    <property type="nucleotide sequence ID" value="NC_010723.1"/>
</dbReference>
<dbReference type="SMR" id="B2V276"/>
<dbReference type="KEGG" id="cbt:CLH_1699"/>
<dbReference type="HOGENOM" id="CLU_018697_2_0_9"/>
<dbReference type="GO" id="GO:0005829">
    <property type="term" value="C:cytosol"/>
    <property type="evidence" value="ECO:0007669"/>
    <property type="project" value="TreeGrafter"/>
</dbReference>
<dbReference type="GO" id="GO:0051539">
    <property type="term" value="F:4 iron, 4 sulfur cluster binding"/>
    <property type="evidence" value="ECO:0007669"/>
    <property type="project" value="UniProtKB-UniRule"/>
</dbReference>
<dbReference type="GO" id="GO:0046872">
    <property type="term" value="F:metal ion binding"/>
    <property type="evidence" value="ECO:0007669"/>
    <property type="project" value="UniProtKB-KW"/>
</dbReference>
<dbReference type="GO" id="GO:0035597">
    <property type="term" value="F:N6-isopentenyladenosine methylthiotransferase activity"/>
    <property type="evidence" value="ECO:0007669"/>
    <property type="project" value="TreeGrafter"/>
</dbReference>
<dbReference type="CDD" id="cd01335">
    <property type="entry name" value="Radical_SAM"/>
    <property type="match status" value="1"/>
</dbReference>
<dbReference type="FunFam" id="3.40.50.12160:FF:000006">
    <property type="entry name" value="tRNA-2-methylthio-N(6)-dimethylallyladenosine synthase"/>
    <property type="match status" value="1"/>
</dbReference>
<dbReference type="FunFam" id="3.80.30.20:FF:000001">
    <property type="entry name" value="tRNA-2-methylthio-N(6)-dimethylallyladenosine synthase 2"/>
    <property type="match status" value="1"/>
</dbReference>
<dbReference type="Gene3D" id="3.40.50.12160">
    <property type="entry name" value="Methylthiotransferase, N-terminal domain"/>
    <property type="match status" value="1"/>
</dbReference>
<dbReference type="Gene3D" id="3.80.30.20">
    <property type="entry name" value="tm_1862 like domain"/>
    <property type="match status" value="1"/>
</dbReference>
<dbReference type="HAMAP" id="MF_01864">
    <property type="entry name" value="tRNA_metthiotr_MiaB"/>
    <property type="match status" value="1"/>
</dbReference>
<dbReference type="InterPro" id="IPR006638">
    <property type="entry name" value="Elp3/MiaA/NifB-like_rSAM"/>
</dbReference>
<dbReference type="InterPro" id="IPR005839">
    <property type="entry name" value="Methylthiotransferase"/>
</dbReference>
<dbReference type="InterPro" id="IPR020612">
    <property type="entry name" value="Methylthiotransferase_CS"/>
</dbReference>
<dbReference type="InterPro" id="IPR013848">
    <property type="entry name" value="Methylthiotransferase_N"/>
</dbReference>
<dbReference type="InterPro" id="IPR038135">
    <property type="entry name" value="Methylthiotransferase_N_sf"/>
</dbReference>
<dbReference type="InterPro" id="IPR006463">
    <property type="entry name" value="MiaB_methiolase"/>
</dbReference>
<dbReference type="InterPro" id="IPR007197">
    <property type="entry name" value="rSAM"/>
</dbReference>
<dbReference type="InterPro" id="IPR023404">
    <property type="entry name" value="rSAM_horseshoe"/>
</dbReference>
<dbReference type="InterPro" id="IPR002792">
    <property type="entry name" value="TRAM_dom"/>
</dbReference>
<dbReference type="NCBIfam" id="TIGR01574">
    <property type="entry name" value="miaB-methiolase"/>
    <property type="match status" value="1"/>
</dbReference>
<dbReference type="NCBIfam" id="TIGR00089">
    <property type="entry name" value="MiaB/RimO family radical SAM methylthiotransferase"/>
    <property type="match status" value="1"/>
</dbReference>
<dbReference type="PANTHER" id="PTHR43020">
    <property type="entry name" value="CDK5 REGULATORY SUBUNIT-ASSOCIATED PROTEIN 1"/>
    <property type="match status" value="1"/>
</dbReference>
<dbReference type="PANTHER" id="PTHR43020:SF2">
    <property type="entry name" value="MITOCHONDRIAL TRNA METHYLTHIOTRANSFERASE CDK5RAP1"/>
    <property type="match status" value="1"/>
</dbReference>
<dbReference type="Pfam" id="PF04055">
    <property type="entry name" value="Radical_SAM"/>
    <property type="match status" value="1"/>
</dbReference>
<dbReference type="Pfam" id="PF01938">
    <property type="entry name" value="TRAM"/>
    <property type="match status" value="1"/>
</dbReference>
<dbReference type="Pfam" id="PF00919">
    <property type="entry name" value="UPF0004"/>
    <property type="match status" value="1"/>
</dbReference>
<dbReference type="SFLD" id="SFLDF00273">
    <property type="entry name" value="(dimethylallyl)adenosine_tRNA"/>
    <property type="match status" value="1"/>
</dbReference>
<dbReference type="SFLD" id="SFLDG01082">
    <property type="entry name" value="B12-binding_domain_containing"/>
    <property type="match status" value="1"/>
</dbReference>
<dbReference type="SFLD" id="SFLDS00029">
    <property type="entry name" value="Radical_SAM"/>
    <property type="match status" value="1"/>
</dbReference>
<dbReference type="SMART" id="SM00729">
    <property type="entry name" value="Elp3"/>
    <property type="match status" value="1"/>
</dbReference>
<dbReference type="SUPFAM" id="SSF102114">
    <property type="entry name" value="Radical SAM enzymes"/>
    <property type="match status" value="1"/>
</dbReference>
<dbReference type="PROSITE" id="PS51449">
    <property type="entry name" value="MTTASE_N"/>
    <property type="match status" value="1"/>
</dbReference>
<dbReference type="PROSITE" id="PS01278">
    <property type="entry name" value="MTTASE_RADICAL"/>
    <property type="match status" value="1"/>
</dbReference>
<dbReference type="PROSITE" id="PS51918">
    <property type="entry name" value="RADICAL_SAM"/>
    <property type="match status" value="1"/>
</dbReference>
<dbReference type="PROSITE" id="PS50926">
    <property type="entry name" value="TRAM"/>
    <property type="match status" value="1"/>
</dbReference>
<comment type="function">
    <text evidence="1">Catalyzes the methylthiolation of N6-(dimethylallyl)adenosine (i(6)A), leading to the formation of 2-methylthio-N6-(dimethylallyl)adenosine (ms(2)i(6)A) at position 37 in tRNAs that read codons beginning with uridine.</text>
</comment>
<comment type="catalytic activity">
    <reaction evidence="1">
        <text>N(6)-dimethylallyladenosine(37) in tRNA + (sulfur carrier)-SH + AH2 + 2 S-adenosyl-L-methionine = 2-methylsulfanyl-N(6)-dimethylallyladenosine(37) in tRNA + (sulfur carrier)-H + 5'-deoxyadenosine + L-methionine + A + S-adenosyl-L-homocysteine + 2 H(+)</text>
        <dbReference type="Rhea" id="RHEA:37067"/>
        <dbReference type="Rhea" id="RHEA-COMP:10375"/>
        <dbReference type="Rhea" id="RHEA-COMP:10376"/>
        <dbReference type="Rhea" id="RHEA-COMP:14737"/>
        <dbReference type="Rhea" id="RHEA-COMP:14739"/>
        <dbReference type="ChEBI" id="CHEBI:13193"/>
        <dbReference type="ChEBI" id="CHEBI:15378"/>
        <dbReference type="ChEBI" id="CHEBI:17319"/>
        <dbReference type="ChEBI" id="CHEBI:17499"/>
        <dbReference type="ChEBI" id="CHEBI:29917"/>
        <dbReference type="ChEBI" id="CHEBI:57844"/>
        <dbReference type="ChEBI" id="CHEBI:57856"/>
        <dbReference type="ChEBI" id="CHEBI:59789"/>
        <dbReference type="ChEBI" id="CHEBI:64428"/>
        <dbReference type="ChEBI" id="CHEBI:74415"/>
        <dbReference type="ChEBI" id="CHEBI:74417"/>
        <dbReference type="EC" id="2.8.4.3"/>
    </reaction>
</comment>
<comment type="cofactor">
    <cofactor evidence="1">
        <name>[4Fe-4S] cluster</name>
        <dbReference type="ChEBI" id="CHEBI:49883"/>
    </cofactor>
    <text evidence="1">Binds 2 [4Fe-4S] clusters. One cluster is coordinated with 3 cysteines and an exchangeable S-adenosyl-L-methionine.</text>
</comment>
<comment type="subunit">
    <text evidence="1">Monomer.</text>
</comment>
<comment type="subcellular location">
    <subcellularLocation>
        <location evidence="1">Cytoplasm</location>
    </subcellularLocation>
</comment>
<comment type="similarity">
    <text evidence="1">Belongs to the methylthiotransferase family. MiaB subfamily.</text>
</comment>
<keyword id="KW-0004">4Fe-4S</keyword>
<keyword id="KW-0963">Cytoplasm</keyword>
<keyword id="KW-0408">Iron</keyword>
<keyword id="KW-0411">Iron-sulfur</keyword>
<keyword id="KW-0479">Metal-binding</keyword>
<keyword id="KW-0949">S-adenosyl-L-methionine</keyword>
<keyword id="KW-0808">Transferase</keyword>
<keyword id="KW-0819">tRNA processing</keyword>
<feature type="chain" id="PRO_0000374221" description="tRNA-2-methylthio-N(6)-dimethylallyladenosine synthase">
    <location>
        <begin position="1"/>
        <end position="456"/>
    </location>
</feature>
<feature type="domain" description="MTTase N-terminal" evidence="1">
    <location>
        <begin position="18"/>
        <end position="136"/>
    </location>
</feature>
<feature type="domain" description="Radical SAM core" evidence="2">
    <location>
        <begin position="159"/>
        <end position="391"/>
    </location>
</feature>
<feature type="domain" description="TRAM" evidence="1">
    <location>
        <begin position="392"/>
        <end position="455"/>
    </location>
</feature>
<feature type="binding site" evidence="1">
    <location>
        <position position="27"/>
    </location>
    <ligand>
        <name>[4Fe-4S] cluster</name>
        <dbReference type="ChEBI" id="CHEBI:49883"/>
        <label>1</label>
    </ligand>
</feature>
<feature type="binding site" evidence="1">
    <location>
        <position position="63"/>
    </location>
    <ligand>
        <name>[4Fe-4S] cluster</name>
        <dbReference type="ChEBI" id="CHEBI:49883"/>
        <label>1</label>
    </ligand>
</feature>
<feature type="binding site" evidence="1">
    <location>
        <position position="97"/>
    </location>
    <ligand>
        <name>[4Fe-4S] cluster</name>
        <dbReference type="ChEBI" id="CHEBI:49883"/>
        <label>1</label>
    </ligand>
</feature>
<feature type="binding site" evidence="1">
    <location>
        <position position="173"/>
    </location>
    <ligand>
        <name>[4Fe-4S] cluster</name>
        <dbReference type="ChEBI" id="CHEBI:49883"/>
        <label>2</label>
        <note>4Fe-4S-S-AdoMet</note>
    </ligand>
</feature>
<feature type="binding site" evidence="1">
    <location>
        <position position="177"/>
    </location>
    <ligand>
        <name>[4Fe-4S] cluster</name>
        <dbReference type="ChEBI" id="CHEBI:49883"/>
        <label>2</label>
        <note>4Fe-4S-S-AdoMet</note>
    </ligand>
</feature>
<feature type="binding site" evidence="1">
    <location>
        <position position="180"/>
    </location>
    <ligand>
        <name>[4Fe-4S] cluster</name>
        <dbReference type="ChEBI" id="CHEBI:49883"/>
        <label>2</label>
        <note>4Fe-4S-S-AdoMet</note>
    </ligand>
</feature>
<evidence type="ECO:0000255" key="1">
    <source>
        <dbReference type="HAMAP-Rule" id="MF_01864"/>
    </source>
</evidence>
<evidence type="ECO:0000255" key="2">
    <source>
        <dbReference type="PROSITE-ProRule" id="PRU01266"/>
    </source>
</evidence>
<proteinExistence type="inferred from homology"/>
<gene>
    <name evidence="1" type="primary">miaB</name>
    <name type="ordered locus">CLH_1699</name>
</gene>
<accession>B2V276</accession>